<gene>
    <name evidence="1" type="primary">secA</name>
    <name type="ordered locus">LBF_2759</name>
</gene>
<protein>
    <recommendedName>
        <fullName evidence="1">Protein translocase subunit SecA</fullName>
        <ecNumber evidence="1">7.4.2.8</ecNumber>
    </recommendedName>
</protein>
<feature type="chain" id="PRO_1000184235" description="Protein translocase subunit SecA">
    <location>
        <begin position="1"/>
        <end position="918"/>
    </location>
</feature>
<feature type="region of interest" description="Disordered" evidence="2">
    <location>
        <begin position="863"/>
        <end position="918"/>
    </location>
</feature>
<feature type="compositionally biased region" description="Basic and acidic residues" evidence="2">
    <location>
        <begin position="863"/>
        <end position="883"/>
    </location>
</feature>
<feature type="binding site" evidence="1">
    <location>
        <position position="87"/>
    </location>
    <ligand>
        <name>ATP</name>
        <dbReference type="ChEBI" id="CHEBI:30616"/>
    </ligand>
</feature>
<feature type="binding site" evidence="1">
    <location>
        <begin position="105"/>
        <end position="109"/>
    </location>
    <ligand>
        <name>ATP</name>
        <dbReference type="ChEBI" id="CHEBI:30616"/>
    </ligand>
</feature>
<feature type="binding site" evidence="1">
    <location>
        <position position="494"/>
    </location>
    <ligand>
        <name>ATP</name>
        <dbReference type="ChEBI" id="CHEBI:30616"/>
    </ligand>
</feature>
<name>SECA_LEPBA</name>
<reference key="1">
    <citation type="journal article" date="2008" name="PLoS ONE">
        <title>Genome sequence of the saprophyte Leptospira biflexa provides insights into the evolution of Leptospira and the pathogenesis of leptospirosis.</title>
        <authorList>
            <person name="Picardeau M."/>
            <person name="Bulach D.M."/>
            <person name="Bouchier C."/>
            <person name="Zuerner R.L."/>
            <person name="Zidane N."/>
            <person name="Wilson P.J."/>
            <person name="Creno S."/>
            <person name="Kuczek E.S."/>
            <person name="Bommezzadri S."/>
            <person name="Davis J.C."/>
            <person name="McGrath A."/>
            <person name="Johnson M.J."/>
            <person name="Boursaux-Eude C."/>
            <person name="Seemann T."/>
            <person name="Rouy Z."/>
            <person name="Coppel R.L."/>
            <person name="Rood J.I."/>
            <person name="Lajus A."/>
            <person name="Davies J.K."/>
            <person name="Medigue C."/>
            <person name="Adler B."/>
        </authorList>
    </citation>
    <scope>NUCLEOTIDE SEQUENCE [LARGE SCALE GENOMIC DNA]</scope>
    <source>
        <strain>Patoc 1 / Ames</strain>
    </source>
</reference>
<accession>B0SEW5</accession>
<evidence type="ECO:0000255" key="1">
    <source>
        <dbReference type="HAMAP-Rule" id="MF_01382"/>
    </source>
</evidence>
<evidence type="ECO:0000256" key="2">
    <source>
        <dbReference type="SAM" id="MobiDB-lite"/>
    </source>
</evidence>
<sequence>MFQKILTILFGSKYERDLKRLNPIVETINSFEVTIKAMDDETLSSQTKKFKERLASGETLDDILPEAFATVREVAYRTLGMRHFDVQMMGGISLHWGNISEMKTGEGKTLTSTLPIYLNSLSGEGVHVVTVNDYLAKRDANWMRPVFEFLKVSVGVIQHDMDHEERKVAYNSDITYGTNNEFGFDYLRDNMVSYKEHRVQRQHNFAIVDEVDSILIDEARTPLIISGPAEESTDKYLKVNKIIPKLVEGEDFEIDEKAKNVILSEAGVHHVEKLLEVDNLYHAENIELVHHVQQALKAHKIFFKDKDYVVQDGEVIIVDEFTGRLMKGRRYSDGLHQSLEAKEGVPIARESQTLASITFQNYFRIYKKLAGMTGTADTEAEEFKKIYNLDVIVIPSNLKIQRQDMPDRVYKTEREKFDAVVKDIQEKVSRKQPVLVGTISIEKSEVLSKLLFSHGIQHNVLNAKQHERESEIVANAGKPGAITIATNMAGRGTDIVLGGAPKYKDDLEKLDDKCDSLGIKNKEELEIIYSFRECLIKQKFDEAEGKISDVRNETIKKECIKILGDAKKWKVDHDFVIGAGGLHIIGSERHESRRIDNQLRGRSGRQGDPGSSRFYLSLQDDLMRIFGSDRIARIMDTLKMPEGQELEHSMVSNAIARAQKRVEGHNFDIRKHLLEYDDVMNRQRIYIYGIRNELLDKGNMSKTVFDFFDEVVENQVILYCEGNNADAWEIDSLNEWLQSLGIDHKIESKDFKKESNPQLKVFEVVSKLVKELYDYKVSSIGDEIWRSIERNVFLDILDHRWKEHLYAMDHLKEGIWTVGYGEKNPLIEYKLQGFKMFDQLVDNLKNEVVSFLLKIEVTESDKKQDDTSPKEYKKIGQEQRAEVDMFGNELKSNKTKPQVSSTTSSGGGSERRSSRRKK</sequence>
<comment type="function">
    <text evidence="1">Part of the Sec protein translocase complex. Interacts with the SecYEG preprotein conducting channel. Has a central role in coupling the hydrolysis of ATP to the transfer of proteins into and across the cell membrane, serving as an ATP-driven molecular motor driving the stepwise translocation of polypeptide chains across the membrane.</text>
</comment>
<comment type="catalytic activity">
    <reaction evidence="1">
        <text>ATP + H2O + cellular proteinSide 1 = ADP + phosphate + cellular proteinSide 2.</text>
        <dbReference type="EC" id="7.4.2.8"/>
    </reaction>
</comment>
<comment type="subunit">
    <text evidence="1">Monomer and homodimer. Part of the essential Sec protein translocation apparatus which comprises SecA, SecYEG and auxiliary proteins SecDF. Other proteins may also be involved.</text>
</comment>
<comment type="subcellular location">
    <subcellularLocation>
        <location evidence="1">Cell inner membrane</location>
        <topology evidence="1">Peripheral membrane protein</topology>
        <orientation evidence="1">Cytoplasmic side</orientation>
    </subcellularLocation>
    <subcellularLocation>
        <location evidence="1">Cytoplasm</location>
    </subcellularLocation>
    <text evidence="1">Distribution is 50-50.</text>
</comment>
<comment type="similarity">
    <text evidence="1">Belongs to the SecA family.</text>
</comment>
<proteinExistence type="inferred from homology"/>
<dbReference type="EC" id="7.4.2.8" evidence="1"/>
<dbReference type="EMBL" id="CP000777">
    <property type="protein sequence ID" value="ABZ95239.1"/>
    <property type="molecule type" value="Genomic_DNA"/>
</dbReference>
<dbReference type="RefSeq" id="WP_012389786.1">
    <property type="nucleotide sequence ID" value="NC_010842.1"/>
</dbReference>
<dbReference type="SMR" id="B0SEW5"/>
<dbReference type="KEGG" id="lbf:LBF_2759"/>
<dbReference type="HOGENOM" id="CLU_005314_3_0_12"/>
<dbReference type="GO" id="GO:0031522">
    <property type="term" value="C:cell envelope Sec protein transport complex"/>
    <property type="evidence" value="ECO:0007669"/>
    <property type="project" value="TreeGrafter"/>
</dbReference>
<dbReference type="GO" id="GO:0005829">
    <property type="term" value="C:cytosol"/>
    <property type="evidence" value="ECO:0007669"/>
    <property type="project" value="TreeGrafter"/>
</dbReference>
<dbReference type="GO" id="GO:0005886">
    <property type="term" value="C:plasma membrane"/>
    <property type="evidence" value="ECO:0007669"/>
    <property type="project" value="UniProtKB-SubCell"/>
</dbReference>
<dbReference type="GO" id="GO:0005524">
    <property type="term" value="F:ATP binding"/>
    <property type="evidence" value="ECO:0007669"/>
    <property type="project" value="UniProtKB-UniRule"/>
</dbReference>
<dbReference type="GO" id="GO:0008564">
    <property type="term" value="F:protein-exporting ATPase activity"/>
    <property type="evidence" value="ECO:0007669"/>
    <property type="project" value="UniProtKB-EC"/>
</dbReference>
<dbReference type="GO" id="GO:0065002">
    <property type="term" value="P:intracellular protein transmembrane transport"/>
    <property type="evidence" value="ECO:0007669"/>
    <property type="project" value="UniProtKB-UniRule"/>
</dbReference>
<dbReference type="GO" id="GO:0017038">
    <property type="term" value="P:protein import"/>
    <property type="evidence" value="ECO:0007669"/>
    <property type="project" value="InterPro"/>
</dbReference>
<dbReference type="GO" id="GO:0006605">
    <property type="term" value="P:protein targeting"/>
    <property type="evidence" value="ECO:0007669"/>
    <property type="project" value="UniProtKB-UniRule"/>
</dbReference>
<dbReference type="GO" id="GO:0043952">
    <property type="term" value="P:protein transport by the Sec complex"/>
    <property type="evidence" value="ECO:0007669"/>
    <property type="project" value="TreeGrafter"/>
</dbReference>
<dbReference type="CDD" id="cd17928">
    <property type="entry name" value="DEXDc_SecA"/>
    <property type="match status" value="1"/>
</dbReference>
<dbReference type="CDD" id="cd18803">
    <property type="entry name" value="SF2_C_secA"/>
    <property type="match status" value="1"/>
</dbReference>
<dbReference type="FunFam" id="3.90.1440.10:FF:000001">
    <property type="entry name" value="Preprotein translocase subunit SecA"/>
    <property type="match status" value="1"/>
</dbReference>
<dbReference type="Gene3D" id="1.10.3060.10">
    <property type="entry name" value="Helical scaffold and wing domains of SecA"/>
    <property type="match status" value="1"/>
</dbReference>
<dbReference type="Gene3D" id="3.40.50.300">
    <property type="entry name" value="P-loop containing nucleotide triphosphate hydrolases"/>
    <property type="match status" value="2"/>
</dbReference>
<dbReference type="Gene3D" id="3.90.1440.10">
    <property type="entry name" value="SecA, preprotein cross-linking domain"/>
    <property type="match status" value="1"/>
</dbReference>
<dbReference type="HAMAP" id="MF_01382">
    <property type="entry name" value="SecA"/>
    <property type="match status" value="1"/>
</dbReference>
<dbReference type="InterPro" id="IPR014001">
    <property type="entry name" value="Helicase_ATP-bd"/>
</dbReference>
<dbReference type="InterPro" id="IPR027417">
    <property type="entry name" value="P-loop_NTPase"/>
</dbReference>
<dbReference type="InterPro" id="IPR000185">
    <property type="entry name" value="SecA"/>
</dbReference>
<dbReference type="InterPro" id="IPR020937">
    <property type="entry name" value="SecA_CS"/>
</dbReference>
<dbReference type="InterPro" id="IPR011115">
    <property type="entry name" value="SecA_DEAD"/>
</dbReference>
<dbReference type="InterPro" id="IPR014018">
    <property type="entry name" value="SecA_motor_DEAD"/>
</dbReference>
<dbReference type="InterPro" id="IPR011130">
    <property type="entry name" value="SecA_preprotein_X-link_dom"/>
</dbReference>
<dbReference type="InterPro" id="IPR044722">
    <property type="entry name" value="SecA_SF2_C"/>
</dbReference>
<dbReference type="InterPro" id="IPR011116">
    <property type="entry name" value="SecA_Wing/Scaffold"/>
</dbReference>
<dbReference type="InterPro" id="IPR036266">
    <property type="entry name" value="SecA_Wing/Scaffold_sf"/>
</dbReference>
<dbReference type="InterPro" id="IPR036670">
    <property type="entry name" value="SecA_X-link_sf"/>
</dbReference>
<dbReference type="NCBIfam" id="NF009538">
    <property type="entry name" value="PRK12904.1"/>
    <property type="match status" value="1"/>
</dbReference>
<dbReference type="NCBIfam" id="TIGR00963">
    <property type="entry name" value="secA"/>
    <property type="match status" value="1"/>
</dbReference>
<dbReference type="PANTHER" id="PTHR30612:SF0">
    <property type="entry name" value="CHLOROPLAST PROTEIN-TRANSPORTING ATPASE"/>
    <property type="match status" value="1"/>
</dbReference>
<dbReference type="PANTHER" id="PTHR30612">
    <property type="entry name" value="SECA INNER MEMBRANE COMPONENT OF SEC PROTEIN SECRETION SYSTEM"/>
    <property type="match status" value="1"/>
</dbReference>
<dbReference type="Pfam" id="PF21090">
    <property type="entry name" value="P-loop_SecA"/>
    <property type="match status" value="1"/>
</dbReference>
<dbReference type="Pfam" id="PF07517">
    <property type="entry name" value="SecA_DEAD"/>
    <property type="match status" value="1"/>
</dbReference>
<dbReference type="Pfam" id="PF01043">
    <property type="entry name" value="SecA_PP_bind"/>
    <property type="match status" value="1"/>
</dbReference>
<dbReference type="Pfam" id="PF07516">
    <property type="entry name" value="SecA_SW"/>
    <property type="match status" value="1"/>
</dbReference>
<dbReference type="PRINTS" id="PR00906">
    <property type="entry name" value="SECA"/>
</dbReference>
<dbReference type="SMART" id="SM00957">
    <property type="entry name" value="SecA_DEAD"/>
    <property type="match status" value="1"/>
</dbReference>
<dbReference type="SMART" id="SM00958">
    <property type="entry name" value="SecA_PP_bind"/>
    <property type="match status" value="1"/>
</dbReference>
<dbReference type="SUPFAM" id="SSF81886">
    <property type="entry name" value="Helical scaffold and wing domains of SecA"/>
    <property type="match status" value="1"/>
</dbReference>
<dbReference type="SUPFAM" id="SSF52540">
    <property type="entry name" value="P-loop containing nucleoside triphosphate hydrolases"/>
    <property type="match status" value="2"/>
</dbReference>
<dbReference type="SUPFAM" id="SSF81767">
    <property type="entry name" value="Pre-protein crosslinking domain of SecA"/>
    <property type="match status" value="1"/>
</dbReference>
<dbReference type="PROSITE" id="PS01312">
    <property type="entry name" value="SECA"/>
    <property type="match status" value="1"/>
</dbReference>
<dbReference type="PROSITE" id="PS51196">
    <property type="entry name" value="SECA_MOTOR_DEAD"/>
    <property type="match status" value="1"/>
</dbReference>
<keyword id="KW-0067">ATP-binding</keyword>
<keyword id="KW-0997">Cell inner membrane</keyword>
<keyword id="KW-1003">Cell membrane</keyword>
<keyword id="KW-0963">Cytoplasm</keyword>
<keyword id="KW-0472">Membrane</keyword>
<keyword id="KW-0547">Nucleotide-binding</keyword>
<keyword id="KW-0653">Protein transport</keyword>
<keyword id="KW-1278">Translocase</keyword>
<keyword id="KW-0811">Translocation</keyword>
<keyword id="KW-0813">Transport</keyword>
<organism>
    <name type="scientific">Leptospira biflexa serovar Patoc (strain Patoc 1 / Ames)</name>
    <dbReference type="NCBI Taxonomy" id="355278"/>
    <lineage>
        <taxon>Bacteria</taxon>
        <taxon>Pseudomonadati</taxon>
        <taxon>Spirochaetota</taxon>
        <taxon>Spirochaetia</taxon>
        <taxon>Leptospirales</taxon>
        <taxon>Leptospiraceae</taxon>
        <taxon>Leptospira</taxon>
    </lineage>
</organism>